<sequence length="472" mass="53490">MTMIRTRFAPSPTGYLHIGGARTALYSWLHTRRHGGRFVLRIEDTDRERSTPEAVNAILEGMAWLGLDYDEGPFYQTERYDRYRQHLQTLLDAGQAYYCYCTKDRLERLRTEQQARKEKPRYDGRCRDLDGPPSEEVADEPVIRFRTPLEGHVVVEDAIRGKVQFLNSELDDLVIARGDGSPTYNFTVVVDDLEMGVTDVIRGDDHLNNTPRQIHLYQALGFEPPRFAHVPMILGEDGKRLSKRHGSVSVLQYRDEGYLPEALLNYLVRLGWSHGDQEVFGVDELIQLFDINEVNHSASTFNPSKLQWLNQQHIMRAEPNHIARHLGPFLAERGVDPAEGPALEAVVRTQQERAKTLVEMADNSLFFYRRPEAYEEKAARKNFKEGTAEILEHCQHCFSGLPSWDAESIHGVVTEAAEAFDVKMGKVAQPLRVAVSGSAVSPPIDATLELLGREETVARVGQAAEWVRQNVG</sequence>
<reference key="1">
    <citation type="submission" date="2006-12" db="EMBL/GenBank/DDBJ databases">
        <title>Complete sequence of Halorhodospira halophila SL1.</title>
        <authorList>
            <consortium name="US DOE Joint Genome Institute"/>
            <person name="Copeland A."/>
            <person name="Lucas S."/>
            <person name="Lapidus A."/>
            <person name="Barry K."/>
            <person name="Detter J.C."/>
            <person name="Glavina del Rio T."/>
            <person name="Hammon N."/>
            <person name="Israni S."/>
            <person name="Dalin E."/>
            <person name="Tice H."/>
            <person name="Pitluck S."/>
            <person name="Saunders E."/>
            <person name="Brettin T."/>
            <person name="Bruce D."/>
            <person name="Han C."/>
            <person name="Tapia R."/>
            <person name="Schmutz J."/>
            <person name="Larimer F."/>
            <person name="Land M."/>
            <person name="Hauser L."/>
            <person name="Kyrpides N."/>
            <person name="Mikhailova N."/>
            <person name="Hoff W."/>
            <person name="Richardson P."/>
        </authorList>
    </citation>
    <scope>NUCLEOTIDE SEQUENCE [LARGE SCALE GENOMIC DNA]</scope>
    <source>
        <strain>DSM 244 / SL1</strain>
    </source>
</reference>
<organism>
    <name type="scientific">Halorhodospira halophila (strain DSM 244 / SL1)</name>
    <name type="common">Ectothiorhodospira halophila (strain DSM 244 / SL1)</name>
    <dbReference type="NCBI Taxonomy" id="349124"/>
    <lineage>
        <taxon>Bacteria</taxon>
        <taxon>Pseudomonadati</taxon>
        <taxon>Pseudomonadota</taxon>
        <taxon>Gammaproteobacteria</taxon>
        <taxon>Chromatiales</taxon>
        <taxon>Ectothiorhodospiraceae</taxon>
        <taxon>Halorhodospira</taxon>
    </lineage>
</organism>
<name>SYE2_HALHL</name>
<dbReference type="EC" id="6.1.1.17" evidence="1"/>
<dbReference type="EMBL" id="CP000544">
    <property type="protein sequence ID" value="ABM62049.1"/>
    <property type="molecule type" value="Genomic_DNA"/>
</dbReference>
<dbReference type="RefSeq" id="WP_011814072.1">
    <property type="nucleotide sequence ID" value="NC_008789.1"/>
</dbReference>
<dbReference type="SMR" id="A1WWI7"/>
<dbReference type="STRING" id="349124.Hhal_1274"/>
<dbReference type="KEGG" id="hha:Hhal_1274"/>
<dbReference type="eggNOG" id="COG0008">
    <property type="taxonomic scope" value="Bacteria"/>
</dbReference>
<dbReference type="HOGENOM" id="CLU_015768_6_3_6"/>
<dbReference type="OrthoDB" id="9807503at2"/>
<dbReference type="Proteomes" id="UP000000647">
    <property type="component" value="Chromosome"/>
</dbReference>
<dbReference type="GO" id="GO:0005829">
    <property type="term" value="C:cytosol"/>
    <property type="evidence" value="ECO:0007669"/>
    <property type="project" value="TreeGrafter"/>
</dbReference>
<dbReference type="GO" id="GO:0005524">
    <property type="term" value="F:ATP binding"/>
    <property type="evidence" value="ECO:0007669"/>
    <property type="project" value="UniProtKB-UniRule"/>
</dbReference>
<dbReference type="GO" id="GO:0004818">
    <property type="term" value="F:glutamate-tRNA ligase activity"/>
    <property type="evidence" value="ECO:0007669"/>
    <property type="project" value="UniProtKB-UniRule"/>
</dbReference>
<dbReference type="GO" id="GO:0000049">
    <property type="term" value="F:tRNA binding"/>
    <property type="evidence" value="ECO:0007669"/>
    <property type="project" value="InterPro"/>
</dbReference>
<dbReference type="GO" id="GO:0008270">
    <property type="term" value="F:zinc ion binding"/>
    <property type="evidence" value="ECO:0007669"/>
    <property type="project" value="UniProtKB-UniRule"/>
</dbReference>
<dbReference type="GO" id="GO:0006424">
    <property type="term" value="P:glutamyl-tRNA aminoacylation"/>
    <property type="evidence" value="ECO:0007669"/>
    <property type="project" value="UniProtKB-UniRule"/>
</dbReference>
<dbReference type="CDD" id="cd00808">
    <property type="entry name" value="GluRS_core"/>
    <property type="match status" value="1"/>
</dbReference>
<dbReference type="FunFam" id="3.40.50.620:FF:000007">
    <property type="entry name" value="Glutamate--tRNA ligase"/>
    <property type="match status" value="1"/>
</dbReference>
<dbReference type="Gene3D" id="1.10.10.350">
    <property type="match status" value="1"/>
</dbReference>
<dbReference type="Gene3D" id="3.40.50.620">
    <property type="entry name" value="HUPs"/>
    <property type="match status" value="1"/>
</dbReference>
<dbReference type="HAMAP" id="MF_00022">
    <property type="entry name" value="Glu_tRNA_synth_type1"/>
    <property type="match status" value="1"/>
</dbReference>
<dbReference type="InterPro" id="IPR045462">
    <property type="entry name" value="aa-tRNA-synth_I_cd-bd"/>
</dbReference>
<dbReference type="InterPro" id="IPR020751">
    <property type="entry name" value="aa-tRNA-synth_I_codon-bd_sub2"/>
</dbReference>
<dbReference type="InterPro" id="IPR001412">
    <property type="entry name" value="aa-tRNA-synth_I_CS"/>
</dbReference>
<dbReference type="InterPro" id="IPR008925">
    <property type="entry name" value="aa_tRNA-synth_I_cd-bd_sf"/>
</dbReference>
<dbReference type="InterPro" id="IPR004527">
    <property type="entry name" value="Glu-tRNA-ligase_bac/mito"/>
</dbReference>
<dbReference type="InterPro" id="IPR000924">
    <property type="entry name" value="Glu/Gln-tRNA-synth"/>
</dbReference>
<dbReference type="InterPro" id="IPR020058">
    <property type="entry name" value="Glu/Gln-tRNA-synth_Ib_cat-dom"/>
</dbReference>
<dbReference type="InterPro" id="IPR049940">
    <property type="entry name" value="GluQ/Sye"/>
</dbReference>
<dbReference type="InterPro" id="IPR033910">
    <property type="entry name" value="GluRS_core"/>
</dbReference>
<dbReference type="InterPro" id="IPR014729">
    <property type="entry name" value="Rossmann-like_a/b/a_fold"/>
</dbReference>
<dbReference type="NCBIfam" id="TIGR00464">
    <property type="entry name" value="gltX_bact"/>
    <property type="match status" value="1"/>
</dbReference>
<dbReference type="PANTHER" id="PTHR43311">
    <property type="entry name" value="GLUTAMATE--TRNA LIGASE"/>
    <property type="match status" value="1"/>
</dbReference>
<dbReference type="PANTHER" id="PTHR43311:SF2">
    <property type="entry name" value="GLUTAMATE--TRNA LIGASE, MITOCHONDRIAL-RELATED"/>
    <property type="match status" value="1"/>
</dbReference>
<dbReference type="Pfam" id="PF19269">
    <property type="entry name" value="Anticodon_2"/>
    <property type="match status" value="1"/>
</dbReference>
<dbReference type="Pfam" id="PF00749">
    <property type="entry name" value="tRNA-synt_1c"/>
    <property type="match status" value="1"/>
</dbReference>
<dbReference type="PRINTS" id="PR00987">
    <property type="entry name" value="TRNASYNTHGLU"/>
</dbReference>
<dbReference type="SUPFAM" id="SSF48163">
    <property type="entry name" value="An anticodon-binding domain of class I aminoacyl-tRNA synthetases"/>
    <property type="match status" value="1"/>
</dbReference>
<dbReference type="SUPFAM" id="SSF52374">
    <property type="entry name" value="Nucleotidylyl transferase"/>
    <property type="match status" value="1"/>
</dbReference>
<dbReference type="PROSITE" id="PS00178">
    <property type="entry name" value="AA_TRNA_LIGASE_I"/>
    <property type="match status" value="1"/>
</dbReference>
<gene>
    <name evidence="1" type="primary">gltX2</name>
    <name type="ordered locus">Hhal_1274</name>
</gene>
<comment type="function">
    <text evidence="1">Catalyzes the attachment of glutamate to tRNA(Glu) in a two-step reaction: glutamate is first activated by ATP to form Glu-AMP and then transferred to the acceptor end of tRNA(Glu).</text>
</comment>
<comment type="catalytic activity">
    <reaction evidence="1">
        <text>tRNA(Glu) + L-glutamate + ATP = L-glutamyl-tRNA(Glu) + AMP + diphosphate</text>
        <dbReference type="Rhea" id="RHEA:23540"/>
        <dbReference type="Rhea" id="RHEA-COMP:9663"/>
        <dbReference type="Rhea" id="RHEA-COMP:9680"/>
        <dbReference type="ChEBI" id="CHEBI:29985"/>
        <dbReference type="ChEBI" id="CHEBI:30616"/>
        <dbReference type="ChEBI" id="CHEBI:33019"/>
        <dbReference type="ChEBI" id="CHEBI:78442"/>
        <dbReference type="ChEBI" id="CHEBI:78520"/>
        <dbReference type="ChEBI" id="CHEBI:456215"/>
        <dbReference type="EC" id="6.1.1.17"/>
    </reaction>
</comment>
<comment type="cofactor">
    <cofactor evidence="1">
        <name>Zn(2+)</name>
        <dbReference type="ChEBI" id="CHEBI:29105"/>
    </cofactor>
    <text evidence="1">Binds 1 zinc ion per subunit.</text>
</comment>
<comment type="subunit">
    <text evidence="1">Monomer.</text>
</comment>
<comment type="subcellular location">
    <subcellularLocation>
        <location evidence="1">Cytoplasm</location>
    </subcellularLocation>
</comment>
<comment type="similarity">
    <text evidence="1">Belongs to the class-I aminoacyl-tRNA synthetase family. Glutamate--tRNA ligase type 1 subfamily.</text>
</comment>
<feature type="chain" id="PRO_0000367679" description="Glutamate--tRNA ligase 2">
    <location>
        <begin position="1"/>
        <end position="472"/>
    </location>
</feature>
<feature type="region of interest" description="Disordered" evidence="2">
    <location>
        <begin position="112"/>
        <end position="137"/>
    </location>
</feature>
<feature type="short sequence motif" description="'HIGH' region" evidence="1">
    <location>
        <begin position="10"/>
        <end position="20"/>
    </location>
</feature>
<feature type="short sequence motif" description="'KMSKS' region" evidence="1">
    <location>
        <begin position="240"/>
        <end position="244"/>
    </location>
</feature>
<feature type="compositionally biased region" description="Basic and acidic residues" evidence="2">
    <location>
        <begin position="112"/>
        <end position="130"/>
    </location>
</feature>
<feature type="binding site" evidence="1">
    <location>
        <position position="99"/>
    </location>
    <ligand>
        <name>Zn(2+)</name>
        <dbReference type="ChEBI" id="CHEBI:29105"/>
    </ligand>
</feature>
<feature type="binding site" evidence="1">
    <location>
        <position position="101"/>
    </location>
    <ligand>
        <name>Zn(2+)</name>
        <dbReference type="ChEBI" id="CHEBI:29105"/>
    </ligand>
</feature>
<feature type="binding site" evidence="1">
    <location>
        <position position="126"/>
    </location>
    <ligand>
        <name>Zn(2+)</name>
        <dbReference type="ChEBI" id="CHEBI:29105"/>
    </ligand>
</feature>
<feature type="binding site" evidence="1">
    <location>
        <position position="128"/>
    </location>
    <ligand>
        <name>Zn(2+)</name>
        <dbReference type="ChEBI" id="CHEBI:29105"/>
    </ligand>
</feature>
<feature type="binding site" evidence="1">
    <location>
        <position position="243"/>
    </location>
    <ligand>
        <name>ATP</name>
        <dbReference type="ChEBI" id="CHEBI:30616"/>
    </ligand>
</feature>
<keyword id="KW-0030">Aminoacyl-tRNA synthetase</keyword>
<keyword id="KW-0067">ATP-binding</keyword>
<keyword id="KW-0963">Cytoplasm</keyword>
<keyword id="KW-0436">Ligase</keyword>
<keyword id="KW-0479">Metal-binding</keyword>
<keyword id="KW-0547">Nucleotide-binding</keyword>
<keyword id="KW-0648">Protein biosynthesis</keyword>
<keyword id="KW-1185">Reference proteome</keyword>
<keyword id="KW-0862">Zinc</keyword>
<proteinExistence type="inferred from homology"/>
<accession>A1WWI7</accession>
<protein>
    <recommendedName>
        <fullName evidence="1">Glutamate--tRNA ligase 2</fullName>
        <ecNumber evidence="1">6.1.1.17</ecNumber>
    </recommendedName>
    <alternativeName>
        <fullName evidence="1">Glutamyl-tRNA synthetase 2</fullName>
        <shortName evidence="1">GluRS 2</shortName>
    </alternativeName>
</protein>
<evidence type="ECO:0000255" key="1">
    <source>
        <dbReference type="HAMAP-Rule" id="MF_00022"/>
    </source>
</evidence>
<evidence type="ECO:0000256" key="2">
    <source>
        <dbReference type="SAM" id="MobiDB-lite"/>
    </source>
</evidence>